<keyword id="KW-0007">Acetylation</keyword>
<keyword id="KW-0113">Calvin cycle</keyword>
<keyword id="KW-0120">Carbon dioxide fixation</keyword>
<keyword id="KW-0150">Chloroplast</keyword>
<keyword id="KW-1015">Disulfide bond</keyword>
<keyword id="KW-0456">Lyase</keyword>
<keyword id="KW-0460">Magnesium</keyword>
<keyword id="KW-0479">Metal-binding</keyword>
<keyword id="KW-0488">Methylation</keyword>
<keyword id="KW-0503">Monooxygenase</keyword>
<keyword id="KW-0560">Oxidoreductase</keyword>
<keyword id="KW-0601">Photorespiration</keyword>
<keyword id="KW-0602">Photosynthesis</keyword>
<keyword id="KW-0934">Plastid</keyword>
<comment type="function">
    <text evidence="1">RuBisCO catalyzes two reactions: the carboxylation of D-ribulose 1,5-bisphosphate, the primary event in carbon dioxide fixation, as well as the oxidative fragmentation of the pentose substrate in the photorespiration process. Both reactions occur simultaneously and in competition at the same active site.</text>
</comment>
<comment type="catalytic activity">
    <reaction evidence="1">
        <text>2 (2R)-3-phosphoglycerate + 2 H(+) = D-ribulose 1,5-bisphosphate + CO2 + H2O</text>
        <dbReference type="Rhea" id="RHEA:23124"/>
        <dbReference type="ChEBI" id="CHEBI:15377"/>
        <dbReference type="ChEBI" id="CHEBI:15378"/>
        <dbReference type="ChEBI" id="CHEBI:16526"/>
        <dbReference type="ChEBI" id="CHEBI:57870"/>
        <dbReference type="ChEBI" id="CHEBI:58272"/>
        <dbReference type="EC" id="4.1.1.39"/>
    </reaction>
</comment>
<comment type="catalytic activity">
    <reaction evidence="1">
        <text>D-ribulose 1,5-bisphosphate + O2 = 2-phosphoglycolate + (2R)-3-phosphoglycerate + 2 H(+)</text>
        <dbReference type="Rhea" id="RHEA:36631"/>
        <dbReference type="ChEBI" id="CHEBI:15378"/>
        <dbReference type="ChEBI" id="CHEBI:15379"/>
        <dbReference type="ChEBI" id="CHEBI:57870"/>
        <dbReference type="ChEBI" id="CHEBI:58033"/>
        <dbReference type="ChEBI" id="CHEBI:58272"/>
    </reaction>
</comment>
<comment type="cofactor">
    <cofactor evidence="1">
        <name>Mg(2+)</name>
        <dbReference type="ChEBI" id="CHEBI:18420"/>
    </cofactor>
    <text evidence="1">Binds 1 Mg(2+) ion per subunit.</text>
</comment>
<comment type="subunit">
    <text evidence="1">Heterohexadecamer of 8 large chains and 8 small chains; disulfide-linked. The disulfide link is formed within the large subunit homodimers.</text>
</comment>
<comment type="subcellular location">
    <subcellularLocation>
        <location>Plastid</location>
        <location>Chloroplast</location>
    </subcellularLocation>
</comment>
<comment type="PTM">
    <text evidence="1">The disulfide bond which can form in the large chain dimeric partners within the hexadecamer appears to be associated with oxidative stress and protein turnover.</text>
</comment>
<comment type="miscellaneous">
    <text evidence="1">The basic functional RuBisCO is composed of a large chain homodimer in a 'head-to-tail' conformation. In form I RuBisCO this homodimer is arranged in a barrel-like tetramer with the small subunits forming a tetrameric 'cap' on each end of the 'barrel'.</text>
</comment>
<comment type="similarity">
    <text evidence="1">Belongs to the RuBisCO large chain family. Type I subfamily.</text>
</comment>
<evidence type="ECO:0000255" key="1">
    <source>
        <dbReference type="HAMAP-Rule" id="MF_01338"/>
    </source>
</evidence>
<protein>
    <recommendedName>
        <fullName evidence="1">Ribulose bisphosphate carboxylase large chain</fullName>
        <shortName evidence="1">RuBisCO large subunit</shortName>
        <ecNumber evidence="1">4.1.1.39</ecNumber>
    </recommendedName>
</protein>
<reference key="1">
    <citation type="journal article" date="1992" name="Ann. Mo. Bot. Gard.">
        <title>Phylogenetic implications of rbcL sequence variation in the Asteraceae.</title>
        <authorList>
            <person name="Kim K.-J."/>
            <person name="Jansen R.K."/>
            <person name="Wallace R.S."/>
            <person name="Michaels H.J."/>
            <person name="Palmer J.D."/>
        </authorList>
        <dbReference type="AGRICOLA" id="IND93015009"/>
    </citation>
    <scope>NUCLEOTIDE SEQUENCE [GENOMIC DNA]</scope>
</reference>
<organism>
    <name type="scientific">Cichorium intybus</name>
    <name type="common">Chicory</name>
    <dbReference type="NCBI Taxonomy" id="13427"/>
    <lineage>
        <taxon>Eukaryota</taxon>
        <taxon>Viridiplantae</taxon>
        <taxon>Streptophyta</taxon>
        <taxon>Embryophyta</taxon>
        <taxon>Tracheophyta</taxon>
        <taxon>Spermatophyta</taxon>
        <taxon>Magnoliopsida</taxon>
        <taxon>eudicotyledons</taxon>
        <taxon>Gunneridae</taxon>
        <taxon>Pentapetalae</taxon>
        <taxon>asterids</taxon>
        <taxon>campanulids</taxon>
        <taxon>Asterales</taxon>
        <taxon>Asteraceae</taxon>
        <taxon>Cichorioideae</taxon>
        <taxon>Cichorieae</taxon>
        <taxon>Cichoriinae</taxon>
        <taxon>Cichorium</taxon>
    </lineage>
</organism>
<name>RBL_CICIN</name>
<accession>P48693</accession>
<sequence>MSPQTETKASVGFKAGVKDYKLTYYTPEYETKDTDILAAFRVTPQPGVPPEEAGAAVAAESSTGTWTTVWTDGLTSLDRYKGRCYGIEPVPGEENQYIAYVAYPLDLFEEGSVTNMFTSIVGNVFGFKALRALRLEDLRIPTAYVKTFQGPRHGIQVERDKLNKYGRPLLGCTIKPKLGLSAKNYGRAVYECLRGGLDFTKDDENVNSQPFMRWRDRFLFCAEAIFKSQAETGEIKGHYLNATAGTCEEMMKRAIFARELGVPIVMHDYLTGGFTANTSLAHYCRDNGLLLHIHRAMHAVIDRQKNHGIHFRVLAKALRMSGGDHIHSGTVVGKLEGEREITLGFVDLLRDDFIEKDRSRGIYFTQDWVSLPGVLPVASGGIHVWHMPALTEIFGDDSVLQFGGGTLGHPWGNAPGAVANRVALEACVQARNEGRDLATEGNEIIREAAKWSPELAAACEVWKEIKFEFQAMDTLDK</sequence>
<gene>
    <name evidence="1" type="primary">rbcL</name>
</gene>
<dbReference type="EC" id="4.1.1.39" evidence="1"/>
<dbReference type="EMBL" id="L13652">
    <property type="protein sequence ID" value="AAA84112.1"/>
    <property type="molecule type" value="Genomic_DNA"/>
</dbReference>
<dbReference type="SMR" id="P48693"/>
<dbReference type="GO" id="GO:0009507">
    <property type="term" value="C:chloroplast"/>
    <property type="evidence" value="ECO:0007669"/>
    <property type="project" value="UniProtKB-SubCell"/>
</dbReference>
<dbReference type="GO" id="GO:0000287">
    <property type="term" value="F:magnesium ion binding"/>
    <property type="evidence" value="ECO:0007669"/>
    <property type="project" value="UniProtKB-UniRule"/>
</dbReference>
<dbReference type="GO" id="GO:0004497">
    <property type="term" value="F:monooxygenase activity"/>
    <property type="evidence" value="ECO:0007669"/>
    <property type="project" value="UniProtKB-KW"/>
</dbReference>
<dbReference type="GO" id="GO:0016984">
    <property type="term" value="F:ribulose-bisphosphate carboxylase activity"/>
    <property type="evidence" value="ECO:0007669"/>
    <property type="project" value="UniProtKB-UniRule"/>
</dbReference>
<dbReference type="GO" id="GO:0009853">
    <property type="term" value="P:photorespiration"/>
    <property type="evidence" value="ECO:0007669"/>
    <property type="project" value="UniProtKB-KW"/>
</dbReference>
<dbReference type="GO" id="GO:0019253">
    <property type="term" value="P:reductive pentose-phosphate cycle"/>
    <property type="evidence" value="ECO:0007669"/>
    <property type="project" value="UniProtKB-UniRule"/>
</dbReference>
<dbReference type="CDD" id="cd08212">
    <property type="entry name" value="RuBisCO_large_I"/>
    <property type="match status" value="1"/>
</dbReference>
<dbReference type="FunFam" id="3.20.20.110:FF:000001">
    <property type="entry name" value="Ribulose bisphosphate carboxylase large chain"/>
    <property type="match status" value="1"/>
</dbReference>
<dbReference type="FunFam" id="3.30.70.150:FF:000001">
    <property type="entry name" value="Ribulose bisphosphate carboxylase large chain"/>
    <property type="match status" value="1"/>
</dbReference>
<dbReference type="Gene3D" id="3.20.20.110">
    <property type="entry name" value="Ribulose bisphosphate carboxylase, large subunit, C-terminal domain"/>
    <property type="match status" value="1"/>
</dbReference>
<dbReference type="Gene3D" id="3.30.70.150">
    <property type="entry name" value="RuBisCO large subunit, N-terminal domain"/>
    <property type="match status" value="1"/>
</dbReference>
<dbReference type="HAMAP" id="MF_01338">
    <property type="entry name" value="RuBisCO_L_type1"/>
    <property type="match status" value="1"/>
</dbReference>
<dbReference type="InterPro" id="IPR033966">
    <property type="entry name" value="RuBisCO"/>
</dbReference>
<dbReference type="InterPro" id="IPR020878">
    <property type="entry name" value="RuBisCo_large_chain_AS"/>
</dbReference>
<dbReference type="InterPro" id="IPR000685">
    <property type="entry name" value="RuBisCO_lsu_C"/>
</dbReference>
<dbReference type="InterPro" id="IPR036376">
    <property type="entry name" value="RuBisCO_lsu_C_sf"/>
</dbReference>
<dbReference type="InterPro" id="IPR017443">
    <property type="entry name" value="RuBisCO_lsu_fd_N"/>
</dbReference>
<dbReference type="InterPro" id="IPR036422">
    <property type="entry name" value="RuBisCO_lsu_N_sf"/>
</dbReference>
<dbReference type="InterPro" id="IPR020888">
    <property type="entry name" value="RuBisCO_lsuI"/>
</dbReference>
<dbReference type="NCBIfam" id="NF003252">
    <property type="entry name" value="PRK04208.1"/>
    <property type="match status" value="1"/>
</dbReference>
<dbReference type="PANTHER" id="PTHR42704">
    <property type="entry name" value="RIBULOSE BISPHOSPHATE CARBOXYLASE"/>
    <property type="match status" value="1"/>
</dbReference>
<dbReference type="PANTHER" id="PTHR42704:SF15">
    <property type="entry name" value="RIBULOSE BISPHOSPHATE CARBOXYLASE LARGE CHAIN"/>
    <property type="match status" value="1"/>
</dbReference>
<dbReference type="Pfam" id="PF00016">
    <property type="entry name" value="RuBisCO_large"/>
    <property type="match status" value="1"/>
</dbReference>
<dbReference type="Pfam" id="PF02788">
    <property type="entry name" value="RuBisCO_large_N"/>
    <property type="match status" value="1"/>
</dbReference>
<dbReference type="SFLD" id="SFLDG01052">
    <property type="entry name" value="RuBisCO"/>
    <property type="match status" value="1"/>
</dbReference>
<dbReference type="SFLD" id="SFLDS00014">
    <property type="entry name" value="RuBisCO"/>
    <property type="match status" value="1"/>
</dbReference>
<dbReference type="SFLD" id="SFLDG00301">
    <property type="entry name" value="RuBisCO-like_proteins"/>
    <property type="match status" value="1"/>
</dbReference>
<dbReference type="SUPFAM" id="SSF51649">
    <property type="entry name" value="RuBisCo, C-terminal domain"/>
    <property type="match status" value="1"/>
</dbReference>
<dbReference type="SUPFAM" id="SSF54966">
    <property type="entry name" value="RuBisCO, large subunit, small (N-terminal) domain"/>
    <property type="match status" value="1"/>
</dbReference>
<dbReference type="PROSITE" id="PS00157">
    <property type="entry name" value="RUBISCO_LARGE"/>
    <property type="match status" value="1"/>
</dbReference>
<feature type="propeptide" id="PRO_0000031177" evidence="1">
    <location>
        <begin position="1"/>
        <end position="2"/>
    </location>
</feature>
<feature type="chain" id="PRO_0000031178" description="Ribulose bisphosphate carboxylase large chain">
    <location>
        <begin position="3"/>
        <end position="477"/>
    </location>
</feature>
<feature type="active site" description="Proton acceptor" evidence="1">
    <location>
        <position position="175"/>
    </location>
</feature>
<feature type="active site" description="Proton acceptor" evidence="1">
    <location>
        <position position="294"/>
    </location>
</feature>
<feature type="binding site" description="in homodimeric partner" evidence="1">
    <location>
        <position position="123"/>
    </location>
    <ligand>
        <name>substrate</name>
    </ligand>
</feature>
<feature type="binding site" evidence="1">
    <location>
        <position position="173"/>
    </location>
    <ligand>
        <name>substrate</name>
    </ligand>
</feature>
<feature type="binding site" evidence="1">
    <location>
        <position position="177"/>
    </location>
    <ligand>
        <name>substrate</name>
    </ligand>
</feature>
<feature type="binding site" description="via carbamate group" evidence="1">
    <location>
        <position position="201"/>
    </location>
    <ligand>
        <name>Mg(2+)</name>
        <dbReference type="ChEBI" id="CHEBI:18420"/>
    </ligand>
</feature>
<feature type="binding site" evidence="1">
    <location>
        <position position="203"/>
    </location>
    <ligand>
        <name>Mg(2+)</name>
        <dbReference type="ChEBI" id="CHEBI:18420"/>
    </ligand>
</feature>
<feature type="binding site" evidence="1">
    <location>
        <position position="204"/>
    </location>
    <ligand>
        <name>Mg(2+)</name>
        <dbReference type="ChEBI" id="CHEBI:18420"/>
    </ligand>
</feature>
<feature type="binding site" evidence="1">
    <location>
        <position position="295"/>
    </location>
    <ligand>
        <name>substrate</name>
    </ligand>
</feature>
<feature type="binding site" evidence="1">
    <location>
        <position position="327"/>
    </location>
    <ligand>
        <name>substrate</name>
    </ligand>
</feature>
<feature type="binding site" evidence="1">
    <location>
        <position position="379"/>
    </location>
    <ligand>
        <name>substrate</name>
    </ligand>
</feature>
<feature type="site" description="Transition state stabilizer" evidence="1">
    <location>
        <position position="334"/>
    </location>
</feature>
<feature type="modified residue" description="N-acetylproline" evidence="1">
    <location>
        <position position="3"/>
    </location>
</feature>
<feature type="modified residue" description="N6,N6,N6-trimethyllysine" evidence="1">
    <location>
        <position position="14"/>
    </location>
</feature>
<feature type="modified residue" description="N6-carboxylysine" evidence="1">
    <location>
        <position position="201"/>
    </location>
</feature>
<feature type="disulfide bond" description="Interchain; in linked form" evidence="1">
    <location>
        <position position="247"/>
    </location>
</feature>
<proteinExistence type="inferred from homology"/>
<geneLocation type="chloroplast"/>